<gene>
    <name evidence="1" type="primary">frr</name>
    <name type="ordered locus">SpyM51488</name>
</gene>
<name>RRF_STRPG</name>
<sequence length="185" mass="20572">MANAIIETAKERFAQSHQSLSREYASIRAGRANASLLDRIQVDYYGAPTPLNQLASITVPEARVLLISPFDKSSIKDIERALNASDLGITPANDGSVIRLVIPALTEETRKELAKEVKKVGENAKIAIRNIRRDAMDDAKKQEKAKEITEDELKTLEKDIQKATDDAIKEIDRMTAEKEKELLSV</sequence>
<comment type="function">
    <text evidence="1">Responsible for the release of ribosomes from messenger RNA at the termination of protein biosynthesis. May increase the efficiency of translation by recycling ribosomes from one round of translation to another.</text>
</comment>
<comment type="subcellular location">
    <subcellularLocation>
        <location evidence="1">Cytoplasm</location>
    </subcellularLocation>
</comment>
<comment type="similarity">
    <text evidence="1">Belongs to the RRF family.</text>
</comment>
<keyword id="KW-0963">Cytoplasm</keyword>
<keyword id="KW-0648">Protein biosynthesis</keyword>
<reference key="1">
    <citation type="journal article" date="2007" name="J. Bacteriol.">
        <title>Complete genome of acute rheumatic fever-associated serotype M5 Streptococcus pyogenes strain Manfredo.</title>
        <authorList>
            <person name="Holden M.T.G."/>
            <person name="Scott A."/>
            <person name="Cherevach I."/>
            <person name="Chillingworth T."/>
            <person name="Churcher C."/>
            <person name="Cronin A."/>
            <person name="Dowd L."/>
            <person name="Feltwell T."/>
            <person name="Hamlin N."/>
            <person name="Holroyd S."/>
            <person name="Jagels K."/>
            <person name="Moule S."/>
            <person name="Mungall K."/>
            <person name="Quail M.A."/>
            <person name="Price C."/>
            <person name="Rabbinowitsch E."/>
            <person name="Sharp S."/>
            <person name="Skelton J."/>
            <person name="Whitehead S."/>
            <person name="Barrell B.G."/>
            <person name="Kehoe M."/>
            <person name="Parkhill J."/>
        </authorList>
    </citation>
    <scope>NUCLEOTIDE SEQUENCE [LARGE SCALE GENOMIC DNA]</scope>
    <source>
        <strain>Manfredo</strain>
    </source>
</reference>
<protein>
    <recommendedName>
        <fullName evidence="1">Ribosome-recycling factor</fullName>
        <shortName evidence="1">RRF</shortName>
    </recommendedName>
    <alternativeName>
        <fullName evidence="1">Ribosome-releasing factor</fullName>
    </alternativeName>
</protein>
<evidence type="ECO:0000255" key="1">
    <source>
        <dbReference type="HAMAP-Rule" id="MF_00040"/>
    </source>
</evidence>
<feature type="chain" id="PRO_1000003287" description="Ribosome-recycling factor">
    <location>
        <begin position="1"/>
        <end position="185"/>
    </location>
</feature>
<organism>
    <name type="scientific">Streptococcus pyogenes serotype M5 (strain Manfredo)</name>
    <dbReference type="NCBI Taxonomy" id="160491"/>
    <lineage>
        <taxon>Bacteria</taxon>
        <taxon>Bacillati</taxon>
        <taxon>Bacillota</taxon>
        <taxon>Bacilli</taxon>
        <taxon>Lactobacillales</taxon>
        <taxon>Streptococcaceae</taxon>
        <taxon>Streptococcus</taxon>
    </lineage>
</organism>
<proteinExistence type="inferred from homology"/>
<dbReference type="EMBL" id="AM295007">
    <property type="protein sequence ID" value="CAM30809.1"/>
    <property type="molecule type" value="Genomic_DNA"/>
</dbReference>
<dbReference type="RefSeq" id="WP_002985763.1">
    <property type="nucleotide sequence ID" value="NC_009332.1"/>
</dbReference>
<dbReference type="SMR" id="A2RG30"/>
<dbReference type="GeneID" id="69901299"/>
<dbReference type="KEGG" id="spf:SpyM51488"/>
<dbReference type="HOGENOM" id="CLU_073981_2_0_9"/>
<dbReference type="GO" id="GO:0005737">
    <property type="term" value="C:cytoplasm"/>
    <property type="evidence" value="ECO:0007669"/>
    <property type="project" value="UniProtKB-SubCell"/>
</dbReference>
<dbReference type="GO" id="GO:0043023">
    <property type="term" value="F:ribosomal large subunit binding"/>
    <property type="evidence" value="ECO:0007669"/>
    <property type="project" value="TreeGrafter"/>
</dbReference>
<dbReference type="GO" id="GO:0006415">
    <property type="term" value="P:translational termination"/>
    <property type="evidence" value="ECO:0007669"/>
    <property type="project" value="UniProtKB-UniRule"/>
</dbReference>
<dbReference type="CDD" id="cd00520">
    <property type="entry name" value="RRF"/>
    <property type="match status" value="1"/>
</dbReference>
<dbReference type="FunFam" id="1.10.132.20:FF:000001">
    <property type="entry name" value="Ribosome-recycling factor"/>
    <property type="match status" value="1"/>
</dbReference>
<dbReference type="FunFam" id="3.30.1360.40:FF:000001">
    <property type="entry name" value="Ribosome-recycling factor"/>
    <property type="match status" value="1"/>
</dbReference>
<dbReference type="Gene3D" id="3.30.1360.40">
    <property type="match status" value="1"/>
</dbReference>
<dbReference type="Gene3D" id="1.10.132.20">
    <property type="entry name" value="Ribosome-recycling factor"/>
    <property type="match status" value="1"/>
</dbReference>
<dbReference type="HAMAP" id="MF_00040">
    <property type="entry name" value="RRF"/>
    <property type="match status" value="1"/>
</dbReference>
<dbReference type="InterPro" id="IPR002661">
    <property type="entry name" value="Ribosome_recyc_fac"/>
</dbReference>
<dbReference type="InterPro" id="IPR023584">
    <property type="entry name" value="Ribosome_recyc_fac_dom"/>
</dbReference>
<dbReference type="InterPro" id="IPR036191">
    <property type="entry name" value="RRF_sf"/>
</dbReference>
<dbReference type="NCBIfam" id="TIGR00496">
    <property type="entry name" value="frr"/>
    <property type="match status" value="1"/>
</dbReference>
<dbReference type="PANTHER" id="PTHR20982:SF3">
    <property type="entry name" value="MITOCHONDRIAL RIBOSOME RECYCLING FACTOR PSEUDO 1"/>
    <property type="match status" value="1"/>
</dbReference>
<dbReference type="PANTHER" id="PTHR20982">
    <property type="entry name" value="RIBOSOME RECYCLING FACTOR"/>
    <property type="match status" value="1"/>
</dbReference>
<dbReference type="Pfam" id="PF01765">
    <property type="entry name" value="RRF"/>
    <property type="match status" value="1"/>
</dbReference>
<dbReference type="SUPFAM" id="SSF55194">
    <property type="entry name" value="Ribosome recycling factor, RRF"/>
    <property type="match status" value="1"/>
</dbReference>
<accession>A2RG30</accession>